<evidence type="ECO:0000255" key="1">
    <source>
        <dbReference type="HAMAP-Rule" id="MF_00183"/>
    </source>
</evidence>
<organism>
    <name type="scientific">Rhizobium etli (strain ATCC 51251 / DSM 11541 / JCM 21823 / NBRC 15573 / CFN 42)</name>
    <dbReference type="NCBI Taxonomy" id="347834"/>
    <lineage>
        <taxon>Bacteria</taxon>
        <taxon>Pseudomonadati</taxon>
        <taxon>Pseudomonadota</taxon>
        <taxon>Alphaproteobacteria</taxon>
        <taxon>Hyphomicrobiales</taxon>
        <taxon>Rhizobiaceae</taxon>
        <taxon>Rhizobium/Agrobacterium group</taxon>
        <taxon>Rhizobium</taxon>
    </lineage>
</organism>
<comment type="function">
    <text evidence="1">Catalyzes the NADPH-dependent rearrangement and reduction of 1-deoxy-D-xylulose-5-phosphate (DXP) to 2-C-methyl-D-erythritol 4-phosphate (MEP).</text>
</comment>
<comment type="catalytic activity">
    <reaction evidence="1">
        <text>2-C-methyl-D-erythritol 4-phosphate + NADP(+) = 1-deoxy-D-xylulose 5-phosphate + NADPH + H(+)</text>
        <dbReference type="Rhea" id="RHEA:13717"/>
        <dbReference type="ChEBI" id="CHEBI:15378"/>
        <dbReference type="ChEBI" id="CHEBI:57783"/>
        <dbReference type="ChEBI" id="CHEBI:57792"/>
        <dbReference type="ChEBI" id="CHEBI:58262"/>
        <dbReference type="ChEBI" id="CHEBI:58349"/>
        <dbReference type="EC" id="1.1.1.267"/>
    </reaction>
    <physiologicalReaction direction="right-to-left" evidence="1">
        <dbReference type="Rhea" id="RHEA:13719"/>
    </physiologicalReaction>
</comment>
<comment type="cofactor">
    <cofactor evidence="1">
        <name>Mg(2+)</name>
        <dbReference type="ChEBI" id="CHEBI:18420"/>
    </cofactor>
    <cofactor evidence="1">
        <name>Mn(2+)</name>
        <dbReference type="ChEBI" id="CHEBI:29035"/>
    </cofactor>
</comment>
<comment type="pathway">
    <text evidence="1">Isoprenoid biosynthesis; isopentenyl diphosphate biosynthesis via DXP pathway; isopentenyl diphosphate from 1-deoxy-D-xylulose 5-phosphate: step 1/6.</text>
</comment>
<comment type="similarity">
    <text evidence="1">Belongs to the DXR family.</text>
</comment>
<sequence>MTTGKTAPRRLSIFGSTGSIGRNTLNVIEHLGGRENFEISVLTGNGNVELLARQARSSGARLAVTASDRHYESLKRELSGSGIAVASGKSGLMEAADRDADWVMAAIVGTAGLAPTLAAARRGADIALANKECLVSAGDLFIKAIREGGGRLLPVDSEHNAIFQVLEENQRHAIERVILTASGGPFRNASLEEMKHVTAETARAHPNWSMGLKISIDSASMFNKALEMIEARHLFSLNPDQIEVIFHPQSIIHSMVGYTDGSVLAQLGAPDMRTAIGYALSFPRRPKLPVERLDFAKLARLDFEAPDEVRFPALRLAHLAMTRGGVQGAVLNGAKEVALEAFIEGRLAFLAMAEITERVMDDLAHLPPAAGMDDVFSADRQARQRAAELMKLDLVG</sequence>
<name>DXR_RHIEC</name>
<gene>
    <name evidence="1" type="primary">dxr</name>
    <name type="ordered locus">RHE_CH03839</name>
</gene>
<feature type="chain" id="PRO_1000020297" description="1-deoxy-D-xylulose 5-phosphate reductoisomerase">
    <location>
        <begin position="1"/>
        <end position="396"/>
    </location>
</feature>
<feature type="binding site" evidence="1">
    <location>
        <position position="17"/>
    </location>
    <ligand>
        <name>NADPH</name>
        <dbReference type="ChEBI" id="CHEBI:57783"/>
    </ligand>
</feature>
<feature type="binding site" evidence="1">
    <location>
        <position position="18"/>
    </location>
    <ligand>
        <name>NADPH</name>
        <dbReference type="ChEBI" id="CHEBI:57783"/>
    </ligand>
</feature>
<feature type="binding site" evidence="1">
    <location>
        <position position="19"/>
    </location>
    <ligand>
        <name>NADPH</name>
        <dbReference type="ChEBI" id="CHEBI:57783"/>
    </ligand>
</feature>
<feature type="binding site" evidence="1">
    <location>
        <position position="20"/>
    </location>
    <ligand>
        <name>NADPH</name>
        <dbReference type="ChEBI" id="CHEBI:57783"/>
    </ligand>
</feature>
<feature type="binding site" evidence="1">
    <location>
        <position position="47"/>
    </location>
    <ligand>
        <name>NADPH</name>
        <dbReference type="ChEBI" id="CHEBI:57783"/>
    </ligand>
</feature>
<feature type="binding site" evidence="1">
    <location>
        <position position="130"/>
    </location>
    <ligand>
        <name>NADPH</name>
        <dbReference type="ChEBI" id="CHEBI:57783"/>
    </ligand>
</feature>
<feature type="binding site" evidence="1">
    <location>
        <position position="131"/>
    </location>
    <ligand>
        <name>1-deoxy-D-xylulose 5-phosphate</name>
        <dbReference type="ChEBI" id="CHEBI:57792"/>
    </ligand>
</feature>
<feature type="binding site" evidence="1">
    <location>
        <position position="132"/>
    </location>
    <ligand>
        <name>NADPH</name>
        <dbReference type="ChEBI" id="CHEBI:57783"/>
    </ligand>
</feature>
<feature type="binding site" evidence="1">
    <location>
        <position position="156"/>
    </location>
    <ligand>
        <name>Mn(2+)</name>
        <dbReference type="ChEBI" id="CHEBI:29035"/>
    </ligand>
</feature>
<feature type="binding site" evidence="1">
    <location>
        <position position="157"/>
    </location>
    <ligand>
        <name>1-deoxy-D-xylulose 5-phosphate</name>
        <dbReference type="ChEBI" id="CHEBI:57792"/>
    </ligand>
</feature>
<feature type="binding site" evidence="1">
    <location>
        <position position="158"/>
    </location>
    <ligand>
        <name>1-deoxy-D-xylulose 5-phosphate</name>
        <dbReference type="ChEBI" id="CHEBI:57792"/>
    </ligand>
</feature>
<feature type="binding site" evidence="1">
    <location>
        <position position="158"/>
    </location>
    <ligand>
        <name>Mn(2+)</name>
        <dbReference type="ChEBI" id="CHEBI:29035"/>
    </ligand>
</feature>
<feature type="binding site" evidence="1">
    <location>
        <position position="182"/>
    </location>
    <ligand>
        <name>1-deoxy-D-xylulose 5-phosphate</name>
        <dbReference type="ChEBI" id="CHEBI:57792"/>
    </ligand>
</feature>
<feature type="binding site" evidence="1">
    <location>
        <position position="205"/>
    </location>
    <ligand>
        <name>1-deoxy-D-xylulose 5-phosphate</name>
        <dbReference type="ChEBI" id="CHEBI:57792"/>
    </ligand>
</feature>
<feature type="binding site" evidence="1">
    <location>
        <position position="211"/>
    </location>
    <ligand>
        <name>NADPH</name>
        <dbReference type="ChEBI" id="CHEBI:57783"/>
    </ligand>
</feature>
<feature type="binding site" evidence="1">
    <location>
        <position position="218"/>
    </location>
    <ligand>
        <name>1-deoxy-D-xylulose 5-phosphate</name>
        <dbReference type="ChEBI" id="CHEBI:57792"/>
    </ligand>
</feature>
<feature type="binding site" evidence="1">
    <location>
        <position position="223"/>
    </location>
    <ligand>
        <name>1-deoxy-D-xylulose 5-phosphate</name>
        <dbReference type="ChEBI" id="CHEBI:57792"/>
    </ligand>
</feature>
<feature type="binding site" evidence="1">
    <location>
        <position position="224"/>
    </location>
    <ligand>
        <name>1-deoxy-D-xylulose 5-phosphate</name>
        <dbReference type="ChEBI" id="CHEBI:57792"/>
    </ligand>
</feature>
<feature type="binding site" evidence="1">
    <location>
        <position position="227"/>
    </location>
    <ligand>
        <name>1-deoxy-D-xylulose 5-phosphate</name>
        <dbReference type="ChEBI" id="CHEBI:57792"/>
    </ligand>
</feature>
<feature type="binding site" evidence="1">
    <location>
        <position position="227"/>
    </location>
    <ligand>
        <name>Mn(2+)</name>
        <dbReference type="ChEBI" id="CHEBI:29035"/>
    </ligand>
</feature>
<proteinExistence type="inferred from homology"/>
<keyword id="KW-0414">Isoprene biosynthesis</keyword>
<keyword id="KW-0464">Manganese</keyword>
<keyword id="KW-0479">Metal-binding</keyword>
<keyword id="KW-0521">NADP</keyword>
<keyword id="KW-0560">Oxidoreductase</keyword>
<keyword id="KW-1185">Reference proteome</keyword>
<protein>
    <recommendedName>
        <fullName evidence="1">1-deoxy-D-xylulose 5-phosphate reductoisomerase</fullName>
        <shortName evidence="1">DXP reductoisomerase</shortName>
        <ecNumber evidence="1">1.1.1.267</ecNumber>
    </recommendedName>
    <alternativeName>
        <fullName evidence="1">1-deoxyxylulose-5-phosphate reductoisomerase</fullName>
    </alternativeName>
    <alternativeName>
        <fullName evidence="1">2-C-methyl-D-erythritol 4-phosphate synthase</fullName>
    </alternativeName>
</protein>
<reference key="1">
    <citation type="journal article" date="2006" name="Proc. Natl. Acad. Sci. U.S.A.">
        <title>The partitioned Rhizobium etli genome: genetic and metabolic redundancy in seven interacting replicons.</title>
        <authorList>
            <person name="Gonzalez V."/>
            <person name="Santamaria R.I."/>
            <person name="Bustos P."/>
            <person name="Hernandez-Gonzalez I."/>
            <person name="Medrano-Soto A."/>
            <person name="Moreno-Hagelsieb G."/>
            <person name="Janga S.C."/>
            <person name="Ramirez M.A."/>
            <person name="Jimenez-Jacinto V."/>
            <person name="Collado-Vides J."/>
            <person name="Davila G."/>
        </authorList>
    </citation>
    <scope>NUCLEOTIDE SEQUENCE [LARGE SCALE GENOMIC DNA]</scope>
    <source>
        <strain>ATCC 51251 / DSM 11541 / JCM 21823 / NBRC 15573 / CFN 42</strain>
    </source>
</reference>
<dbReference type="EC" id="1.1.1.267" evidence="1"/>
<dbReference type="EMBL" id="CP000133">
    <property type="protein sequence ID" value="ABC92586.1"/>
    <property type="molecule type" value="Genomic_DNA"/>
</dbReference>
<dbReference type="RefSeq" id="WP_011427035.1">
    <property type="nucleotide sequence ID" value="NC_007761.1"/>
</dbReference>
<dbReference type="SMR" id="Q2K3K0"/>
<dbReference type="KEGG" id="ret:RHE_CH03839"/>
<dbReference type="eggNOG" id="COG0743">
    <property type="taxonomic scope" value="Bacteria"/>
</dbReference>
<dbReference type="HOGENOM" id="CLU_035714_4_0_5"/>
<dbReference type="OrthoDB" id="9806546at2"/>
<dbReference type="UniPathway" id="UPA00056">
    <property type="reaction ID" value="UER00092"/>
</dbReference>
<dbReference type="Proteomes" id="UP000001936">
    <property type="component" value="Chromosome"/>
</dbReference>
<dbReference type="GO" id="GO:0030604">
    <property type="term" value="F:1-deoxy-D-xylulose-5-phosphate reductoisomerase activity"/>
    <property type="evidence" value="ECO:0007669"/>
    <property type="project" value="UniProtKB-UniRule"/>
</dbReference>
<dbReference type="GO" id="GO:0030145">
    <property type="term" value="F:manganese ion binding"/>
    <property type="evidence" value="ECO:0007669"/>
    <property type="project" value="TreeGrafter"/>
</dbReference>
<dbReference type="GO" id="GO:0070402">
    <property type="term" value="F:NADPH binding"/>
    <property type="evidence" value="ECO:0007669"/>
    <property type="project" value="InterPro"/>
</dbReference>
<dbReference type="GO" id="GO:0051484">
    <property type="term" value="P:isopentenyl diphosphate biosynthetic process, methylerythritol 4-phosphate pathway involved in terpenoid biosynthetic process"/>
    <property type="evidence" value="ECO:0007669"/>
    <property type="project" value="TreeGrafter"/>
</dbReference>
<dbReference type="FunFam" id="3.40.50.720:FF:000045">
    <property type="entry name" value="1-deoxy-D-xylulose 5-phosphate reductoisomerase"/>
    <property type="match status" value="1"/>
</dbReference>
<dbReference type="Gene3D" id="1.10.1740.10">
    <property type="match status" value="1"/>
</dbReference>
<dbReference type="Gene3D" id="3.40.50.720">
    <property type="entry name" value="NAD(P)-binding Rossmann-like Domain"/>
    <property type="match status" value="1"/>
</dbReference>
<dbReference type="HAMAP" id="MF_00183">
    <property type="entry name" value="DXP_reductoisom"/>
    <property type="match status" value="1"/>
</dbReference>
<dbReference type="InterPro" id="IPR003821">
    <property type="entry name" value="DXP_reductoisomerase"/>
</dbReference>
<dbReference type="InterPro" id="IPR013644">
    <property type="entry name" value="DXP_reductoisomerase_C"/>
</dbReference>
<dbReference type="InterPro" id="IPR013512">
    <property type="entry name" value="DXP_reductoisomerase_N"/>
</dbReference>
<dbReference type="InterPro" id="IPR026877">
    <property type="entry name" value="DXPR_C"/>
</dbReference>
<dbReference type="InterPro" id="IPR036169">
    <property type="entry name" value="DXPR_C_sf"/>
</dbReference>
<dbReference type="InterPro" id="IPR036291">
    <property type="entry name" value="NAD(P)-bd_dom_sf"/>
</dbReference>
<dbReference type="NCBIfam" id="TIGR00243">
    <property type="entry name" value="Dxr"/>
    <property type="match status" value="1"/>
</dbReference>
<dbReference type="PANTHER" id="PTHR30525">
    <property type="entry name" value="1-DEOXY-D-XYLULOSE 5-PHOSPHATE REDUCTOISOMERASE"/>
    <property type="match status" value="1"/>
</dbReference>
<dbReference type="PANTHER" id="PTHR30525:SF0">
    <property type="entry name" value="1-DEOXY-D-XYLULOSE 5-PHOSPHATE REDUCTOISOMERASE, CHLOROPLASTIC"/>
    <property type="match status" value="1"/>
</dbReference>
<dbReference type="Pfam" id="PF08436">
    <property type="entry name" value="DXP_redisom_C"/>
    <property type="match status" value="1"/>
</dbReference>
<dbReference type="Pfam" id="PF02670">
    <property type="entry name" value="DXP_reductoisom"/>
    <property type="match status" value="1"/>
</dbReference>
<dbReference type="Pfam" id="PF13288">
    <property type="entry name" value="DXPR_C"/>
    <property type="match status" value="1"/>
</dbReference>
<dbReference type="PIRSF" id="PIRSF006205">
    <property type="entry name" value="Dxp_reductismrs"/>
    <property type="match status" value="1"/>
</dbReference>
<dbReference type="SUPFAM" id="SSF69055">
    <property type="entry name" value="1-deoxy-D-xylulose-5-phosphate reductoisomerase, C-terminal domain"/>
    <property type="match status" value="1"/>
</dbReference>
<dbReference type="SUPFAM" id="SSF55347">
    <property type="entry name" value="Glyceraldehyde-3-phosphate dehydrogenase-like, C-terminal domain"/>
    <property type="match status" value="1"/>
</dbReference>
<dbReference type="SUPFAM" id="SSF51735">
    <property type="entry name" value="NAD(P)-binding Rossmann-fold domains"/>
    <property type="match status" value="1"/>
</dbReference>
<accession>Q2K3K0</accession>